<sequence length="295" mass="33837">MLCTSPVNCLDSVCCTSINISSLVRRAALTHNDNHFNYEKTHNFKVHTFRGPHWCEYCANFMWGLIAQGVRCSDCGLNVHKQCSKHVPNDCQPDLKRIKKVYCCDLTTLVKAHNTQRPMVVDICIREIEARGLKSEGLYRVSGFTEHIEDVKMAFDRDGEKADISANIYPDINIITGALKLYFRDLPIPIITYDTYTKFIEAAKISNADERLEAVHEVLMLLPPAHYETLRYLMIHLKKVTMNEKDNLMNAENLGIVFGPTLMRPPEDSTLTTLHDMRYQKLIVQILIENEDVLF</sequence>
<dbReference type="EMBL" id="X69489">
    <property type="protein sequence ID" value="CAA49244.1"/>
    <property type="molecule type" value="mRNA"/>
</dbReference>
<dbReference type="EMBL" id="L07494">
    <property type="protein sequence ID" value="AAA40809.1"/>
    <property type="molecule type" value="mRNA"/>
</dbReference>
<dbReference type="PIR" id="A45485">
    <property type="entry name" value="S29956"/>
</dbReference>
<dbReference type="RefSeq" id="NP_114473.1">
    <property type="nucleotide sequence ID" value="NM_032084.1"/>
</dbReference>
<dbReference type="SMR" id="Q03070"/>
<dbReference type="FunCoup" id="Q03070">
    <property type="interactions" value="815"/>
</dbReference>
<dbReference type="STRING" id="10116.ENSRNOP00000070229"/>
<dbReference type="PhosphoSitePlus" id="Q03070"/>
<dbReference type="PaxDb" id="10116-ENSRNOP00000012655"/>
<dbReference type="GeneID" id="84031"/>
<dbReference type="KEGG" id="rno:84031"/>
<dbReference type="UCSC" id="RGD:620140">
    <molecule id="Q03070-1"/>
    <property type="organism name" value="rat"/>
</dbReference>
<dbReference type="AGR" id="RGD:620140"/>
<dbReference type="CTD" id="1124"/>
<dbReference type="RGD" id="620140">
    <property type="gene designation" value="Chn2"/>
</dbReference>
<dbReference type="eggNOG" id="KOG1453">
    <property type="taxonomic scope" value="Eukaryota"/>
</dbReference>
<dbReference type="InParanoid" id="Q03070"/>
<dbReference type="Reactome" id="R-RNO-9013149">
    <property type="pathway name" value="RAC1 GTPase cycle"/>
</dbReference>
<dbReference type="PRO" id="PR:Q03070"/>
<dbReference type="Proteomes" id="UP000002494">
    <property type="component" value="Unplaced"/>
</dbReference>
<dbReference type="GO" id="GO:0016020">
    <property type="term" value="C:membrane"/>
    <property type="evidence" value="ECO:0007669"/>
    <property type="project" value="UniProtKB-SubCell"/>
</dbReference>
<dbReference type="GO" id="GO:0045202">
    <property type="term" value="C:synapse"/>
    <property type="evidence" value="ECO:0000266"/>
    <property type="project" value="RGD"/>
</dbReference>
<dbReference type="GO" id="GO:0005096">
    <property type="term" value="F:GTPase activator activity"/>
    <property type="evidence" value="ECO:0000314"/>
    <property type="project" value="RGD"/>
</dbReference>
<dbReference type="GO" id="GO:0001565">
    <property type="term" value="F:phorbol ester receptor activity"/>
    <property type="evidence" value="ECO:0000304"/>
    <property type="project" value="RGD"/>
</dbReference>
<dbReference type="GO" id="GO:0008270">
    <property type="term" value="F:zinc ion binding"/>
    <property type="evidence" value="ECO:0007669"/>
    <property type="project" value="UniProtKB-KW"/>
</dbReference>
<dbReference type="GO" id="GO:0001675">
    <property type="term" value="P:acrosome assembly"/>
    <property type="evidence" value="ECO:0000270"/>
    <property type="project" value="RGD"/>
</dbReference>
<dbReference type="GO" id="GO:0007165">
    <property type="term" value="P:signal transduction"/>
    <property type="evidence" value="ECO:0007669"/>
    <property type="project" value="InterPro"/>
</dbReference>
<dbReference type="CDD" id="cd04372">
    <property type="entry name" value="RhoGAP_chimaerin"/>
    <property type="match status" value="1"/>
</dbReference>
<dbReference type="FunFam" id="1.10.555.10:FF:000005">
    <property type="entry name" value="Chimaerin"/>
    <property type="match status" value="1"/>
</dbReference>
<dbReference type="FunFam" id="3.30.60.20:FF:000025">
    <property type="entry name" value="Chimaerin"/>
    <property type="match status" value="1"/>
</dbReference>
<dbReference type="Gene3D" id="3.30.60.20">
    <property type="match status" value="1"/>
</dbReference>
<dbReference type="Gene3D" id="1.10.555.10">
    <property type="entry name" value="Rho GTPase activation protein"/>
    <property type="match status" value="1"/>
</dbReference>
<dbReference type="InterPro" id="IPR046349">
    <property type="entry name" value="C1-like_sf"/>
</dbReference>
<dbReference type="InterPro" id="IPR020454">
    <property type="entry name" value="DAG/PE-bd"/>
</dbReference>
<dbReference type="InterPro" id="IPR002219">
    <property type="entry name" value="PE/DAG-bd"/>
</dbReference>
<dbReference type="InterPro" id="IPR051854">
    <property type="entry name" value="Rho-type_GAP"/>
</dbReference>
<dbReference type="InterPro" id="IPR008936">
    <property type="entry name" value="Rho_GTPase_activation_prot"/>
</dbReference>
<dbReference type="InterPro" id="IPR037860">
    <property type="entry name" value="RhoGAP_chimaerin"/>
</dbReference>
<dbReference type="InterPro" id="IPR000198">
    <property type="entry name" value="RhoGAP_dom"/>
</dbReference>
<dbReference type="PANTHER" id="PTHR46075:SF4">
    <property type="entry name" value="BETA-CHIMAERIN"/>
    <property type="match status" value="1"/>
</dbReference>
<dbReference type="PANTHER" id="PTHR46075">
    <property type="entry name" value="CHIMERIN FAMILY MEMBER"/>
    <property type="match status" value="1"/>
</dbReference>
<dbReference type="Pfam" id="PF00130">
    <property type="entry name" value="C1_1"/>
    <property type="match status" value="1"/>
</dbReference>
<dbReference type="Pfam" id="PF00620">
    <property type="entry name" value="RhoGAP"/>
    <property type="match status" value="1"/>
</dbReference>
<dbReference type="PRINTS" id="PR00008">
    <property type="entry name" value="DAGPEDOMAIN"/>
</dbReference>
<dbReference type="SMART" id="SM00109">
    <property type="entry name" value="C1"/>
    <property type="match status" value="1"/>
</dbReference>
<dbReference type="SMART" id="SM00324">
    <property type="entry name" value="RhoGAP"/>
    <property type="match status" value="1"/>
</dbReference>
<dbReference type="SUPFAM" id="SSF57889">
    <property type="entry name" value="Cysteine-rich domain"/>
    <property type="match status" value="1"/>
</dbReference>
<dbReference type="SUPFAM" id="SSF48350">
    <property type="entry name" value="GTPase activation domain, GAP"/>
    <property type="match status" value="1"/>
</dbReference>
<dbReference type="PROSITE" id="PS50238">
    <property type="entry name" value="RHOGAP"/>
    <property type="match status" value="1"/>
</dbReference>
<dbReference type="PROSITE" id="PS00479">
    <property type="entry name" value="ZF_DAG_PE_1"/>
    <property type="match status" value="1"/>
</dbReference>
<dbReference type="PROSITE" id="PS50081">
    <property type="entry name" value="ZF_DAG_PE_2"/>
    <property type="match status" value="1"/>
</dbReference>
<evidence type="ECO:0000250" key="1"/>
<evidence type="ECO:0000255" key="2">
    <source>
        <dbReference type="PROSITE-ProRule" id="PRU00172"/>
    </source>
</evidence>
<evidence type="ECO:0000255" key="3">
    <source>
        <dbReference type="PROSITE-ProRule" id="PRU00226"/>
    </source>
</evidence>
<evidence type="ECO:0000305" key="4"/>
<keyword id="KW-0025">Alternative splicing</keyword>
<keyword id="KW-0343">GTPase activation</keyword>
<keyword id="KW-0472">Membrane</keyword>
<keyword id="KW-0479">Metal-binding</keyword>
<keyword id="KW-1185">Reference proteome</keyword>
<keyword id="KW-0727">SH2 domain</keyword>
<keyword id="KW-0862">Zinc</keyword>
<keyword id="KW-0863">Zinc-finger</keyword>
<gene>
    <name type="primary">Chn2</name>
    <name type="synonym">Arhgap3</name>
    <name type="synonym">Bch</name>
</gene>
<protein>
    <recommendedName>
        <fullName>Beta-chimaerin</fullName>
    </recommendedName>
    <alternativeName>
        <fullName>Beta-chimerin</fullName>
    </alternativeName>
    <alternativeName>
        <fullName>Rho GTPase-activating protein 3</fullName>
    </alternativeName>
</protein>
<reference key="1">
    <citation type="journal article" date="1993" name="J. Biol. Chem.">
        <title>Germ cell beta-chimaerin, a new GTPase-activating protein for p21rac, is specifically expressed during the acrosomal assembly stage in rat testis.</title>
        <authorList>
            <person name="Leung T."/>
            <person name="How B.E."/>
            <person name="Manser E."/>
            <person name="Lim L."/>
        </authorList>
    </citation>
    <scope>NUCLEOTIDE SEQUENCE [MRNA]</scope>
    <source>
        <strain>Wistar</strain>
        <tissue>Testis</tissue>
    </source>
</reference>
<feature type="chain" id="PRO_0000056699" description="Beta-chimaerin">
    <location>
        <begin position="1"/>
        <end position="295"/>
    </location>
</feature>
<feature type="domain" description="Rho-GAP" evidence="2">
    <location>
        <begin position="104"/>
        <end position="295"/>
    </location>
</feature>
<feature type="zinc finger region" description="Phorbol-ester/DAG-type" evidence="3">
    <location>
        <begin position="41"/>
        <end position="91"/>
    </location>
</feature>
<feature type="site" description="Arginine finger; crucial for GTP hydrolysis by stabilizing the transition state" evidence="2">
    <location>
        <position position="140"/>
    </location>
</feature>
<name>CHIO_RAT</name>
<accession>Q03070</accession>
<comment type="function">
    <text>GTPase-activating protein for p21-rac.</text>
</comment>
<comment type="activity regulation">
    <text evidence="1">In the inactive state, the N terminus protrudes into the active site of the Rho-GAP domain, sterically blocking Rac binding. Phospholipid binding to the Phorbol-ester/DAG-type zinc-finger/C1 domain triggers the cooperative dissociation of these interactions, allowing the N-terminus to move out of the active site and thereby activating the enzyme (By similarity).</text>
</comment>
<comment type="subcellular location">
    <subcellularLocation>
        <location evidence="4">Membrane</location>
        <topology evidence="4">Peripheral membrane protein</topology>
    </subcellularLocation>
</comment>
<comment type="alternative products">
    <event type="alternative splicing"/>
    <isoform>
        <id>Q03070-1</id>
        <name>Beta-1</name>
        <sequence type="displayed"/>
    </isoform>
    <isoform>
        <id>Q03070-2</id>
        <name>Beta-2</name>
        <sequence type="not described"/>
    </isoform>
</comment>
<comment type="tissue specificity">
    <text>Found in cerebellum and testis.</text>
</comment>
<comment type="developmental stage">
    <text>Expressed specifically in late stage spermatocytes. In the cerebellum, emergence of beta-2 isoform coincides with granule cells maturation and exhibits postnatal developmental increases. Expression is specifically reduced in weaver mutant.</text>
</comment>
<proteinExistence type="evidence at transcript level"/>
<organism>
    <name type="scientific">Rattus norvegicus</name>
    <name type="common">Rat</name>
    <dbReference type="NCBI Taxonomy" id="10116"/>
    <lineage>
        <taxon>Eukaryota</taxon>
        <taxon>Metazoa</taxon>
        <taxon>Chordata</taxon>
        <taxon>Craniata</taxon>
        <taxon>Vertebrata</taxon>
        <taxon>Euteleostomi</taxon>
        <taxon>Mammalia</taxon>
        <taxon>Eutheria</taxon>
        <taxon>Euarchontoglires</taxon>
        <taxon>Glires</taxon>
        <taxon>Rodentia</taxon>
        <taxon>Myomorpha</taxon>
        <taxon>Muroidea</taxon>
        <taxon>Muridae</taxon>
        <taxon>Murinae</taxon>
        <taxon>Rattus</taxon>
    </lineage>
</organism>